<dbReference type="EMBL" id="X57401">
    <property type="protein sequence ID" value="CAA40657.1"/>
    <property type="molecule type" value="Genomic_DNA"/>
</dbReference>
<dbReference type="PIR" id="S15194">
    <property type="entry name" value="S15194"/>
</dbReference>
<dbReference type="RefSeq" id="WP_004147437.1">
    <property type="nucleotide sequence ID" value="NZ_WYAL01000004.1"/>
</dbReference>
<dbReference type="SMR" id="P27218"/>
<dbReference type="OMA" id="GGWHIAP"/>
<dbReference type="GO" id="GO:0009279">
    <property type="term" value="C:cell outer membrane"/>
    <property type="evidence" value="ECO:0007669"/>
    <property type="project" value="UniProtKB-SubCell"/>
</dbReference>
<dbReference type="GO" id="GO:0046930">
    <property type="term" value="C:pore complex"/>
    <property type="evidence" value="ECO:0007669"/>
    <property type="project" value="UniProtKB-KW"/>
</dbReference>
<dbReference type="GO" id="GO:0015144">
    <property type="term" value="F:carbohydrate transmembrane transporter activity"/>
    <property type="evidence" value="ECO:0007669"/>
    <property type="project" value="TreeGrafter"/>
</dbReference>
<dbReference type="GO" id="GO:0015288">
    <property type="term" value="F:porin activity"/>
    <property type="evidence" value="ECO:0007669"/>
    <property type="project" value="UniProtKB-KW"/>
</dbReference>
<dbReference type="GO" id="GO:0006811">
    <property type="term" value="P:monoatomic ion transport"/>
    <property type="evidence" value="ECO:0007669"/>
    <property type="project" value="UniProtKB-KW"/>
</dbReference>
<dbReference type="GO" id="GO:0015774">
    <property type="term" value="P:polysaccharide transport"/>
    <property type="evidence" value="ECO:0007669"/>
    <property type="project" value="TreeGrafter"/>
</dbReference>
<dbReference type="CDD" id="cd01346">
    <property type="entry name" value="Maltoporin-like"/>
    <property type="match status" value="1"/>
</dbReference>
<dbReference type="Gene3D" id="1.20.5.340">
    <property type="match status" value="1"/>
</dbReference>
<dbReference type="Gene3D" id="2.40.170.10">
    <property type="entry name" value="Porin, LamB type"/>
    <property type="match status" value="1"/>
</dbReference>
<dbReference type="InterPro" id="IPR050286">
    <property type="entry name" value="G_neg_Bact_CarbUptk_Porin"/>
</dbReference>
<dbReference type="InterPro" id="IPR021570">
    <property type="entry name" value="LamB-type_porin_N_dom"/>
</dbReference>
<dbReference type="InterPro" id="IPR003192">
    <property type="entry name" value="Porin_LamB"/>
</dbReference>
<dbReference type="InterPro" id="IPR036998">
    <property type="entry name" value="Porin_LamB_sf"/>
</dbReference>
<dbReference type="PANTHER" id="PTHR38762">
    <property type="entry name" value="CRYPTIC OUTER MEMBRANE PORIN BGLH-RELATED"/>
    <property type="match status" value="1"/>
</dbReference>
<dbReference type="PANTHER" id="PTHR38762:SF1">
    <property type="entry name" value="CRYPTIC OUTER MEMBRANE PORIN BGLH-RELATED"/>
    <property type="match status" value="1"/>
</dbReference>
<dbReference type="Pfam" id="PF02264">
    <property type="entry name" value="LamB"/>
    <property type="match status" value="1"/>
</dbReference>
<dbReference type="Pfam" id="PF11471">
    <property type="entry name" value="Sugarporin_N"/>
    <property type="match status" value="1"/>
</dbReference>
<dbReference type="SUPFAM" id="SSF56935">
    <property type="entry name" value="Porins"/>
    <property type="match status" value="1"/>
</dbReference>
<dbReference type="SUPFAM" id="SSF57997">
    <property type="entry name" value="Tropomyosin"/>
    <property type="match status" value="1"/>
</dbReference>
<gene>
    <name type="primary">scrY</name>
</gene>
<feature type="signal peptide" evidence="2">
    <location>
        <begin position="1"/>
        <end position="22"/>
    </location>
</feature>
<feature type="chain" id="PRO_0000025185" description="Sucrose porin">
    <location>
        <begin position="23"/>
        <end position="505"/>
    </location>
</feature>
<feature type="region of interest" description="Disordered" evidence="3">
    <location>
        <begin position="44"/>
        <end position="94"/>
    </location>
</feature>
<feature type="compositionally biased region" description="Low complexity" evidence="3">
    <location>
        <begin position="46"/>
        <end position="82"/>
    </location>
</feature>
<feature type="compositionally biased region" description="Basic and acidic residues" evidence="3">
    <location>
        <begin position="83"/>
        <end position="93"/>
    </location>
</feature>
<sequence length="505" mass="55651">MYKKRKLAILIALLTGTAAAHGQTDLNSIEARLAALEKRLQDAETRASTAESRAASAEQKVQQLTQQQQQTQATTQQVARRTTQLEEKAERPGGFEFHGYARSGVIMNDSAASTKSGAYMTPAGETGGAIGRLGNQADTYVEMNLEHKQTLDNGATTRFKVMVADGQTTYNDWTASSSDLNVRQAFVELGNLPTFEGPFKGSTLWAGKRFDRDNFDIHWIDSDVVFLAGTGGGIYDVKWNDSLRSNFSLYGRNFGDIADSSNSVQNYIVSMNNFAGPVQMMVSGMRAKDNDDRQDANGNLVKGDAANTGVHALLGLHNESFYGLRDGTSKTALLYGHGLGAEVKGIGSDGALRPGANTWRFASYGTTPLSDRWFIAPAVLAQSSKDRYVDGDSYQWATLNLRLIQEVTQNFALAWEGSYQYMDLQPEGYNDRHAVNGSFYKLTFAPTFKVGSIGDFFSRPEIRFYTSWMDWSKKLDNYANDDALGSNGFKSGGEWSFGMQMETWF</sequence>
<name>SCRY_KLEPN</name>
<evidence type="ECO:0000250" key="1"/>
<evidence type="ECO:0000255" key="2"/>
<evidence type="ECO:0000256" key="3">
    <source>
        <dbReference type="SAM" id="MobiDB-lite"/>
    </source>
</evidence>
<evidence type="ECO:0000305" key="4"/>
<keyword id="KW-0998">Cell outer membrane</keyword>
<keyword id="KW-0406">Ion transport</keyword>
<keyword id="KW-0472">Membrane</keyword>
<keyword id="KW-0626">Porin</keyword>
<keyword id="KW-0732">Signal</keyword>
<keyword id="KW-0762">Sugar transport</keyword>
<keyword id="KW-0812">Transmembrane</keyword>
<keyword id="KW-1134">Transmembrane beta strand</keyword>
<keyword id="KW-0813">Transport</keyword>
<comment type="function">
    <text>Porin for sucrose uptake.</text>
</comment>
<comment type="subunit">
    <text evidence="1">Homotrimer.</text>
</comment>
<comment type="subcellular location">
    <subcellularLocation>
        <location>Cell outer membrane</location>
        <topology>Multi-pass membrane protein</topology>
    </subcellularLocation>
</comment>
<comment type="domain">
    <text>The C-terminus helps to anchor the porin to the outer membrane.</text>
</comment>
<comment type="similarity">
    <text evidence="4">Belongs to the porin LamB (TC 1.B.3) family.</text>
</comment>
<accession>P27218</accession>
<proteinExistence type="inferred from homology"/>
<reference key="1">
    <citation type="journal article" date="1991" name="Mol. Microbiol.">
        <title>A sugar-specific porin, ScrY, is involved in sucrose uptake in enteric bacteria.</title>
        <authorList>
            <person name="Schmid K."/>
            <person name="Ebner R."/>
            <person name="Jahreis K."/>
            <person name="Lengeler J.W."/>
            <person name="Titgemeyer F."/>
        </authorList>
    </citation>
    <scope>NUCLEOTIDE SEQUENCE [GENOMIC DNA]</scope>
    <source>
        <strain>1033-5P14 / KAY2026</strain>
    </source>
</reference>
<organism>
    <name type="scientific">Klebsiella pneumoniae</name>
    <dbReference type="NCBI Taxonomy" id="573"/>
    <lineage>
        <taxon>Bacteria</taxon>
        <taxon>Pseudomonadati</taxon>
        <taxon>Pseudomonadota</taxon>
        <taxon>Gammaproteobacteria</taxon>
        <taxon>Enterobacterales</taxon>
        <taxon>Enterobacteriaceae</taxon>
        <taxon>Klebsiella/Raoultella group</taxon>
        <taxon>Klebsiella</taxon>
        <taxon>Klebsiella pneumoniae complex</taxon>
    </lineage>
</organism>
<protein>
    <recommendedName>
        <fullName>Sucrose porin</fullName>
    </recommendedName>
</protein>